<sequence>MNSNSLSRFTSIVRTTSIRGFHDRSSVPRVVDDREKSSAKYNDAGYTFRYHQQGVDPLPRIPDCKVPVARPAYKVRDQWSDEAARFGQNDYIDLLGDGSVHPAQLQYHTPTWLRGFPGQHKANELIKLIHYRNLYDAKLKQNSPKRWHELRKRIKYLMMQHNYNKQDEIGRERNLGLWEEEPDYTYKDKSRRSFKDEIH</sequence>
<keyword id="KW-0496">Mitochondrion</keyword>
<keyword id="KW-1185">Reference proteome</keyword>
<keyword id="KW-0687">Ribonucleoprotein</keyword>
<keyword id="KW-0689">Ribosomal protein</keyword>
<keyword id="KW-0809">Transit peptide</keyword>
<feature type="transit peptide" description="Mitochondrion" evidence="2">
    <location>
        <begin position="1"/>
        <end position="15"/>
    </location>
</feature>
<feature type="chain" id="PRO_0000273089" description="Large ribosomal subunit protein mL51">
    <location>
        <begin position="16"/>
        <end position="199"/>
    </location>
</feature>
<gene>
    <name type="primary">mrpl-51</name>
    <name type="ORF">T12G3.5</name>
</gene>
<comment type="subunit">
    <text evidence="1">Component of the mitochondrial ribosome large subunit (39S) which comprises a 16S rRNA and about 50 distinct proteins (By similarity).</text>
</comment>
<comment type="subcellular location">
    <subcellularLocation>
        <location evidence="1">Mitochondrion</location>
    </subcellularLocation>
</comment>
<comment type="similarity">
    <text evidence="3">Belongs to the mitochondrion-specific ribosomal protein mL51 family.</text>
</comment>
<accession>Q22438</accession>
<organism>
    <name type="scientific">Caenorhabditis elegans</name>
    <dbReference type="NCBI Taxonomy" id="6239"/>
    <lineage>
        <taxon>Eukaryota</taxon>
        <taxon>Metazoa</taxon>
        <taxon>Ecdysozoa</taxon>
        <taxon>Nematoda</taxon>
        <taxon>Chromadorea</taxon>
        <taxon>Rhabditida</taxon>
        <taxon>Rhabditina</taxon>
        <taxon>Rhabditomorpha</taxon>
        <taxon>Rhabditoidea</taxon>
        <taxon>Rhabditidae</taxon>
        <taxon>Peloderinae</taxon>
        <taxon>Caenorhabditis</taxon>
    </lineage>
</organism>
<name>RM51_CAEEL</name>
<proteinExistence type="inferred from homology"/>
<dbReference type="EMBL" id="Z68752">
    <property type="protein sequence ID" value="CAA92984.1"/>
    <property type="molecule type" value="Genomic_DNA"/>
</dbReference>
<dbReference type="PIR" id="T24871">
    <property type="entry name" value="T24871"/>
</dbReference>
<dbReference type="RefSeq" id="NP_502279.1">
    <property type="nucleotide sequence ID" value="NM_069878.8"/>
</dbReference>
<dbReference type="BioGRID" id="53122">
    <property type="interactions" value="2"/>
</dbReference>
<dbReference type="FunCoup" id="Q22438">
    <property type="interactions" value="239"/>
</dbReference>
<dbReference type="STRING" id="6239.T12G3.5.2"/>
<dbReference type="PaxDb" id="6239-T12G3.5.2"/>
<dbReference type="PeptideAtlas" id="Q22438"/>
<dbReference type="EnsemblMetazoa" id="T12G3.5.1">
    <property type="protein sequence ID" value="T12G3.5.1"/>
    <property type="gene ID" value="WBGene00011740"/>
</dbReference>
<dbReference type="GeneID" id="188457"/>
<dbReference type="KEGG" id="cel:CELE_T12G3.5"/>
<dbReference type="UCSC" id="T12G3.5">
    <property type="organism name" value="c. elegans"/>
</dbReference>
<dbReference type="AGR" id="WB:WBGene00011740"/>
<dbReference type="CTD" id="188457"/>
<dbReference type="WormBase" id="T12G3.5">
    <property type="protein sequence ID" value="CE06441"/>
    <property type="gene ID" value="WBGene00011740"/>
    <property type="gene designation" value="mrpl-51"/>
</dbReference>
<dbReference type="eggNOG" id="KOG4045">
    <property type="taxonomic scope" value="Eukaryota"/>
</dbReference>
<dbReference type="GeneTree" id="ENSGT00390000018821"/>
<dbReference type="HOGENOM" id="CLU_098800_0_0_1"/>
<dbReference type="InParanoid" id="Q22438"/>
<dbReference type="OMA" id="YRYHRPG"/>
<dbReference type="OrthoDB" id="10059330at2759"/>
<dbReference type="PhylomeDB" id="Q22438"/>
<dbReference type="Reactome" id="R-CEL-5389840">
    <property type="pathway name" value="Mitochondrial translation elongation"/>
</dbReference>
<dbReference type="Reactome" id="R-CEL-5419276">
    <property type="pathway name" value="Mitochondrial translation termination"/>
</dbReference>
<dbReference type="PRO" id="PR:Q22438"/>
<dbReference type="Proteomes" id="UP000001940">
    <property type="component" value="Chromosome IV"/>
</dbReference>
<dbReference type="Bgee" id="WBGene00011740">
    <property type="expression patterns" value="Expressed in germ line (C elegans) and 4 other cell types or tissues"/>
</dbReference>
<dbReference type="GO" id="GO:0005762">
    <property type="term" value="C:mitochondrial large ribosomal subunit"/>
    <property type="evidence" value="ECO:0000250"/>
    <property type="project" value="UniProtKB"/>
</dbReference>
<dbReference type="GO" id="GO:0005761">
    <property type="term" value="C:mitochondrial ribosome"/>
    <property type="evidence" value="ECO:0000250"/>
    <property type="project" value="UniProtKB"/>
</dbReference>
<dbReference type="GO" id="GO:0003735">
    <property type="term" value="F:structural constituent of ribosome"/>
    <property type="evidence" value="ECO:0000250"/>
    <property type="project" value="UniProtKB"/>
</dbReference>
<dbReference type="GO" id="GO:0032543">
    <property type="term" value="P:mitochondrial translation"/>
    <property type="evidence" value="ECO:0000250"/>
    <property type="project" value="UniProtKB"/>
</dbReference>
<dbReference type="GO" id="GO:0006412">
    <property type="term" value="P:translation"/>
    <property type="evidence" value="ECO:0000250"/>
    <property type="project" value="UniProtKB"/>
</dbReference>
<dbReference type="InterPro" id="IPR019373">
    <property type="entry name" value="Ribosomal_mL51"/>
</dbReference>
<dbReference type="PANTHER" id="PTHR13409:SF0">
    <property type="entry name" value="LARGE RIBOSOMAL SUBUNIT PROTEIN ML51"/>
    <property type="match status" value="1"/>
</dbReference>
<dbReference type="PANTHER" id="PTHR13409">
    <property type="entry name" value="MITOCHONDRIAL 39S RIBOSOMAL PROTEIN L51"/>
    <property type="match status" value="1"/>
</dbReference>
<dbReference type="Pfam" id="PF10244">
    <property type="entry name" value="MRP-L51"/>
    <property type="match status" value="1"/>
</dbReference>
<protein>
    <recommendedName>
        <fullName evidence="3">Large ribosomal subunit protein mL51</fullName>
    </recommendedName>
    <alternativeName>
        <fullName>39S ribosomal protein L51, mitochondrial</fullName>
        <shortName>L51mt</shortName>
        <shortName>MRP-L51</shortName>
    </alternativeName>
</protein>
<reference key="1">
    <citation type="journal article" date="1998" name="Science">
        <title>Genome sequence of the nematode C. elegans: a platform for investigating biology.</title>
        <authorList>
            <consortium name="The C. elegans sequencing consortium"/>
        </authorList>
    </citation>
    <scope>NUCLEOTIDE SEQUENCE [LARGE SCALE GENOMIC DNA]</scope>
    <source>
        <strain>Bristol N2</strain>
    </source>
</reference>
<evidence type="ECO:0000250" key="1">
    <source>
        <dbReference type="UniProtKB" id="Q4U2R6"/>
    </source>
</evidence>
<evidence type="ECO:0000255" key="2"/>
<evidence type="ECO:0000305" key="3"/>